<accession>P61307</accession>
<protein>
    <recommendedName>
        <fullName evidence="1">Ribosome-recycling factor</fullName>
        <shortName evidence="1">RRF</shortName>
    </recommendedName>
    <alternativeName>
        <fullName evidence="1">Ribosome-releasing factor</fullName>
    </alternativeName>
</protein>
<dbReference type="EMBL" id="AE016958">
    <property type="protein sequence ID" value="AAS05262.1"/>
    <property type="molecule type" value="Genomic_DNA"/>
</dbReference>
<dbReference type="RefSeq" id="WP_003875106.1">
    <property type="nucleotide sequence ID" value="NZ_CP106873.1"/>
</dbReference>
<dbReference type="SMR" id="P61307"/>
<dbReference type="STRING" id="262316.MAP_2945c"/>
<dbReference type="GeneID" id="75271125"/>
<dbReference type="KEGG" id="mpa:MAP_2945c"/>
<dbReference type="eggNOG" id="COG0233">
    <property type="taxonomic scope" value="Bacteria"/>
</dbReference>
<dbReference type="HOGENOM" id="CLU_073981_2_0_11"/>
<dbReference type="Proteomes" id="UP000000580">
    <property type="component" value="Chromosome"/>
</dbReference>
<dbReference type="GO" id="GO:0005737">
    <property type="term" value="C:cytoplasm"/>
    <property type="evidence" value="ECO:0007669"/>
    <property type="project" value="UniProtKB-SubCell"/>
</dbReference>
<dbReference type="GO" id="GO:0043023">
    <property type="term" value="F:ribosomal large subunit binding"/>
    <property type="evidence" value="ECO:0007669"/>
    <property type="project" value="TreeGrafter"/>
</dbReference>
<dbReference type="GO" id="GO:0006415">
    <property type="term" value="P:translational termination"/>
    <property type="evidence" value="ECO:0007669"/>
    <property type="project" value="UniProtKB-UniRule"/>
</dbReference>
<dbReference type="CDD" id="cd00520">
    <property type="entry name" value="RRF"/>
    <property type="match status" value="1"/>
</dbReference>
<dbReference type="FunFam" id="1.10.132.20:FF:000001">
    <property type="entry name" value="Ribosome-recycling factor"/>
    <property type="match status" value="1"/>
</dbReference>
<dbReference type="FunFam" id="3.30.1360.40:FF:000001">
    <property type="entry name" value="Ribosome-recycling factor"/>
    <property type="match status" value="1"/>
</dbReference>
<dbReference type="Gene3D" id="3.30.1360.40">
    <property type="match status" value="1"/>
</dbReference>
<dbReference type="Gene3D" id="1.10.132.20">
    <property type="entry name" value="Ribosome-recycling factor"/>
    <property type="match status" value="1"/>
</dbReference>
<dbReference type="HAMAP" id="MF_00040">
    <property type="entry name" value="RRF"/>
    <property type="match status" value="1"/>
</dbReference>
<dbReference type="InterPro" id="IPR002661">
    <property type="entry name" value="Ribosome_recyc_fac"/>
</dbReference>
<dbReference type="InterPro" id="IPR023584">
    <property type="entry name" value="Ribosome_recyc_fac_dom"/>
</dbReference>
<dbReference type="InterPro" id="IPR036191">
    <property type="entry name" value="RRF_sf"/>
</dbReference>
<dbReference type="NCBIfam" id="TIGR00496">
    <property type="entry name" value="frr"/>
    <property type="match status" value="1"/>
</dbReference>
<dbReference type="PANTHER" id="PTHR20982:SF3">
    <property type="entry name" value="MITOCHONDRIAL RIBOSOME RECYCLING FACTOR PSEUDO 1"/>
    <property type="match status" value="1"/>
</dbReference>
<dbReference type="PANTHER" id="PTHR20982">
    <property type="entry name" value="RIBOSOME RECYCLING FACTOR"/>
    <property type="match status" value="1"/>
</dbReference>
<dbReference type="Pfam" id="PF01765">
    <property type="entry name" value="RRF"/>
    <property type="match status" value="1"/>
</dbReference>
<dbReference type="SUPFAM" id="SSF55194">
    <property type="entry name" value="Ribosome recycling factor, RRF"/>
    <property type="match status" value="1"/>
</dbReference>
<organism>
    <name type="scientific">Mycolicibacterium paratuberculosis (strain ATCC BAA-968 / K-10)</name>
    <name type="common">Mycobacterium paratuberculosis</name>
    <dbReference type="NCBI Taxonomy" id="262316"/>
    <lineage>
        <taxon>Bacteria</taxon>
        <taxon>Bacillati</taxon>
        <taxon>Actinomycetota</taxon>
        <taxon>Actinomycetes</taxon>
        <taxon>Mycobacteriales</taxon>
        <taxon>Mycobacteriaceae</taxon>
        <taxon>Mycobacterium</taxon>
        <taxon>Mycobacterium avium complex (MAC)</taxon>
    </lineage>
</organism>
<comment type="function">
    <text evidence="1">Responsible for the release of ribosomes from messenger RNA at the termination of protein biosynthesis. May increase the efficiency of translation by recycling ribosomes from one round of translation to another.</text>
</comment>
<comment type="subcellular location">
    <subcellularLocation>
        <location evidence="1">Cytoplasm</location>
    </subcellularLocation>
</comment>
<comment type="similarity">
    <text evidence="1">Belongs to the RRF family.</text>
</comment>
<sequence length="185" mass="20651">MIDEALFDAEEKMEKAVAVARDDLSTIRTGRANPGMFSRIVIDYYGAATPITQLASINVPEARLVVIKPYEASQVGAIETAIRNSDLGVNPTNDGTLIRVAVPQLTEERRRELVKQAKSKGEDAKVSVRNIRRKAMEELHRIRKDGEAGEDEVGRAEKDLDKTTHQYITQIDELVKHKEGELLEV</sequence>
<keyword id="KW-0963">Cytoplasm</keyword>
<keyword id="KW-0648">Protein biosynthesis</keyword>
<keyword id="KW-1185">Reference proteome</keyword>
<proteinExistence type="inferred from homology"/>
<reference key="1">
    <citation type="journal article" date="2005" name="Proc. Natl. Acad. Sci. U.S.A.">
        <title>The complete genome sequence of Mycobacterium avium subspecies paratuberculosis.</title>
        <authorList>
            <person name="Li L."/>
            <person name="Bannantine J.P."/>
            <person name="Zhang Q."/>
            <person name="Amonsin A."/>
            <person name="May B.J."/>
            <person name="Alt D."/>
            <person name="Banerji N."/>
            <person name="Kanjilal S."/>
            <person name="Kapur V."/>
        </authorList>
    </citation>
    <scope>NUCLEOTIDE SEQUENCE [LARGE SCALE GENOMIC DNA]</scope>
    <source>
        <strain>ATCC BAA-968 / K-10</strain>
    </source>
</reference>
<feature type="chain" id="PRO_0000167496" description="Ribosome-recycling factor">
    <location>
        <begin position="1"/>
        <end position="185"/>
    </location>
</feature>
<name>RRF_MYCPA</name>
<evidence type="ECO:0000255" key="1">
    <source>
        <dbReference type="HAMAP-Rule" id="MF_00040"/>
    </source>
</evidence>
<gene>
    <name evidence="1" type="primary">frr</name>
    <name type="ordered locus">MAP_2945c</name>
</gene>